<reference key="1">
    <citation type="journal article" date="2009" name="J. Bacteriol.">
        <title>Complete and draft genome sequences of six members of the Aquificales.</title>
        <authorList>
            <person name="Reysenbach A.-L."/>
            <person name="Hamamura N."/>
            <person name="Podar M."/>
            <person name="Griffiths E."/>
            <person name="Ferreira S."/>
            <person name="Hochstein R."/>
            <person name="Heidelberg J."/>
            <person name="Johnson J."/>
            <person name="Mead D."/>
            <person name="Pohorille A."/>
            <person name="Sarmiento M."/>
            <person name="Schweighofer K."/>
            <person name="Seshadri R."/>
            <person name="Voytek M.A."/>
        </authorList>
    </citation>
    <scope>NUCLEOTIDE SEQUENCE [LARGE SCALE GENOMIC DNA]</scope>
    <source>
        <strain>YO3AOP1</strain>
    </source>
</reference>
<organism>
    <name type="scientific">Sulfurihydrogenibium sp. (strain YO3AOP1)</name>
    <dbReference type="NCBI Taxonomy" id="436114"/>
    <lineage>
        <taxon>Bacteria</taxon>
        <taxon>Pseudomonadati</taxon>
        <taxon>Aquificota</taxon>
        <taxon>Aquificia</taxon>
        <taxon>Aquificales</taxon>
        <taxon>Hydrogenothermaceae</taxon>
        <taxon>Sulfurihydrogenibium</taxon>
    </lineage>
</organism>
<name>RL16_SULSY</name>
<dbReference type="EMBL" id="CP001080">
    <property type="protein sequence ID" value="ACD65929.1"/>
    <property type="molecule type" value="Genomic_DNA"/>
</dbReference>
<dbReference type="RefSeq" id="WP_012459018.1">
    <property type="nucleotide sequence ID" value="NC_010730.1"/>
</dbReference>
<dbReference type="SMR" id="B2V7K6"/>
<dbReference type="STRING" id="436114.SYO3AOP1_0284"/>
<dbReference type="KEGG" id="sul:SYO3AOP1_0284"/>
<dbReference type="eggNOG" id="COG0197">
    <property type="taxonomic scope" value="Bacteria"/>
</dbReference>
<dbReference type="HOGENOM" id="CLU_078858_2_1_0"/>
<dbReference type="GO" id="GO:0022625">
    <property type="term" value="C:cytosolic large ribosomal subunit"/>
    <property type="evidence" value="ECO:0007669"/>
    <property type="project" value="TreeGrafter"/>
</dbReference>
<dbReference type="GO" id="GO:0019843">
    <property type="term" value="F:rRNA binding"/>
    <property type="evidence" value="ECO:0007669"/>
    <property type="project" value="UniProtKB-UniRule"/>
</dbReference>
<dbReference type="GO" id="GO:0003735">
    <property type="term" value="F:structural constituent of ribosome"/>
    <property type="evidence" value="ECO:0007669"/>
    <property type="project" value="InterPro"/>
</dbReference>
<dbReference type="GO" id="GO:0000049">
    <property type="term" value="F:tRNA binding"/>
    <property type="evidence" value="ECO:0007669"/>
    <property type="project" value="UniProtKB-KW"/>
</dbReference>
<dbReference type="GO" id="GO:0006412">
    <property type="term" value="P:translation"/>
    <property type="evidence" value="ECO:0007669"/>
    <property type="project" value="UniProtKB-UniRule"/>
</dbReference>
<dbReference type="CDD" id="cd01433">
    <property type="entry name" value="Ribosomal_L16_L10e"/>
    <property type="match status" value="1"/>
</dbReference>
<dbReference type="FunFam" id="3.90.1170.10:FF:000001">
    <property type="entry name" value="50S ribosomal protein L16"/>
    <property type="match status" value="1"/>
</dbReference>
<dbReference type="Gene3D" id="3.90.1170.10">
    <property type="entry name" value="Ribosomal protein L10e/L16"/>
    <property type="match status" value="1"/>
</dbReference>
<dbReference type="HAMAP" id="MF_01342">
    <property type="entry name" value="Ribosomal_uL16"/>
    <property type="match status" value="1"/>
</dbReference>
<dbReference type="InterPro" id="IPR047873">
    <property type="entry name" value="Ribosomal_uL16"/>
</dbReference>
<dbReference type="InterPro" id="IPR000114">
    <property type="entry name" value="Ribosomal_uL16_bact-type"/>
</dbReference>
<dbReference type="InterPro" id="IPR020798">
    <property type="entry name" value="Ribosomal_uL16_CS"/>
</dbReference>
<dbReference type="InterPro" id="IPR016180">
    <property type="entry name" value="Ribosomal_uL16_dom"/>
</dbReference>
<dbReference type="InterPro" id="IPR036920">
    <property type="entry name" value="Ribosomal_uL16_sf"/>
</dbReference>
<dbReference type="NCBIfam" id="TIGR01164">
    <property type="entry name" value="rplP_bact"/>
    <property type="match status" value="1"/>
</dbReference>
<dbReference type="PANTHER" id="PTHR12220">
    <property type="entry name" value="50S/60S RIBOSOMAL PROTEIN L16"/>
    <property type="match status" value="1"/>
</dbReference>
<dbReference type="PANTHER" id="PTHR12220:SF13">
    <property type="entry name" value="LARGE RIBOSOMAL SUBUNIT PROTEIN UL16M"/>
    <property type="match status" value="1"/>
</dbReference>
<dbReference type="Pfam" id="PF00252">
    <property type="entry name" value="Ribosomal_L16"/>
    <property type="match status" value="1"/>
</dbReference>
<dbReference type="PRINTS" id="PR00060">
    <property type="entry name" value="RIBOSOMALL16"/>
</dbReference>
<dbReference type="SUPFAM" id="SSF54686">
    <property type="entry name" value="Ribosomal protein L16p/L10e"/>
    <property type="match status" value="1"/>
</dbReference>
<dbReference type="PROSITE" id="PS00586">
    <property type="entry name" value="RIBOSOMAL_L16_1"/>
    <property type="match status" value="1"/>
</dbReference>
<comment type="function">
    <text evidence="1">Binds 23S rRNA and is also seen to make contacts with the A and possibly P site tRNAs.</text>
</comment>
<comment type="subunit">
    <text evidence="1">Part of the 50S ribosomal subunit.</text>
</comment>
<comment type="similarity">
    <text evidence="1">Belongs to the universal ribosomal protein uL16 family.</text>
</comment>
<keyword id="KW-0687">Ribonucleoprotein</keyword>
<keyword id="KW-0689">Ribosomal protein</keyword>
<keyword id="KW-0694">RNA-binding</keyword>
<keyword id="KW-0699">rRNA-binding</keyword>
<keyword id="KW-0820">tRNA-binding</keyword>
<accession>B2V7K6</accession>
<protein>
    <recommendedName>
        <fullName evidence="1">Large ribosomal subunit protein uL16</fullName>
    </recommendedName>
    <alternativeName>
        <fullName evidence="3">50S ribosomal protein L16</fullName>
    </alternativeName>
</protein>
<sequence>MSLLQPRKVKWRKPQKGRTKGKATRRNQVDFGEYGLQALEPGRLTSRQIEAARIAIVREAKKGAKVWIRVFPHKPVTKKPAETRMGKGKGDLDHYEAIVKPGHILFELAGVPEEVAAEAFRKAGHKLPIKTRLVKSVE</sequence>
<feature type="chain" id="PRO_0000354609" description="Large ribosomal subunit protein uL16">
    <location>
        <begin position="1"/>
        <end position="138"/>
    </location>
</feature>
<feature type="region of interest" description="Disordered" evidence="2">
    <location>
        <begin position="1"/>
        <end position="29"/>
    </location>
</feature>
<feature type="compositionally biased region" description="Basic residues" evidence="2">
    <location>
        <begin position="7"/>
        <end position="25"/>
    </location>
</feature>
<gene>
    <name evidence="1" type="primary">rplP</name>
    <name type="ordered locus">SYO3AOP1_0284</name>
</gene>
<evidence type="ECO:0000255" key="1">
    <source>
        <dbReference type="HAMAP-Rule" id="MF_01342"/>
    </source>
</evidence>
<evidence type="ECO:0000256" key="2">
    <source>
        <dbReference type="SAM" id="MobiDB-lite"/>
    </source>
</evidence>
<evidence type="ECO:0000305" key="3"/>
<proteinExistence type="inferred from homology"/>